<sequence>MSANDRPATGQPTATYESAFLKACRREPVPHTPVWFMRQAGRSLPEYLKVREGIPMLESCMRPELVAEITLQPVRRHNVDAAIYFSDIVVPLKAIGIDLDIKPGVGPVVEKPIRTRADLAQLRDLTPEDVSYVTEAIKLLTAELGETPLIGFAGAPFTLASYLVEGGPSKNHEHTKALMYGDPQLWADLLDRLAEITSAFLKVQIEAGASAVQLFDSWVGALAPADYRRSVMPASTKVFQAVESYGVPRIHFGVGTGELLGLMGEAGADVVGVDWRVPLDEAARRVGTGKALQGNLDPAVLFSTTEAVETKTREVLDAAAGLEGHVFNLGHGVPPTTDPDALTRLVEYVHTQTAR</sequence>
<name>DCUP_STRAW</name>
<organism>
    <name type="scientific">Streptomyces avermitilis (strain ATCC 31267 / DSM 46492 / JCM 5070 / NBRC 14893 / NCIMB 12804 / NRRL 8165 / MA-4680)</name>
    <dbReference type="NCBI Taxonomy" id="227882"/>
    <lineage>
        <taxon>Bacteria</taxon>
        <taxon>Bacillati</taxon>
        <taxon>Actinomycetota</taxon>
        <taxon>Actinomycetes</taxon>
        <taxon>Kitasatosporales</taxon>
        <taxon>Streptomycetaceae</taxon>
        <taxon>Streptomyces</taxon>
    </lineage>
</organism>
<feature type="chain" id="PRO_0000187647" description="Uroporphyrinogen decarboxylase">
    <location>
        <begin position="1"/>
        <end position="355"/>
    </location>
</feature>
<feature type="binding site" evidence="1">
    <location>
        <begin position="38"/>
        <end position="42"/>
    </location>
    <ligand>
        <name>substrate</name>
    </ligand>
</feature>
<feature type="binding site" evidence="1">
    <location>
        <position position="87"/>
    </location>
    <ligand>
        <name>substrate</name>
    </ligand>
</feature>
<feature type="binding site" evidence="1">
    <location>
        <position position="162"/>
    </location>
    <ligand>
        <name>substrate</name>
    </ligand>
</feature>
<feature type="binding site" evidence="1">
    <location>
        <position position="217"/>
    </location>
    <ligand>
        <name>substrate</name>
    </ligand>
</feature>
<feature type="binding site" evidence="1">
    <location>
        <position position="331"/>
    </location>
    <ligand>
        <name>substrate</name>
    </ligand>
</feature>
<feature type="site" description="Transition state stabilizer" evidence="1">
    <location>
        <position position="87"/>
    </location>
</feature>
<evidence type="ECO:0000255" key="1">
    <source>
        <dbReference type="HAMAP-Rule" id="MF_00218"/>
    </source>
</evidence>
<protein>
    <recommendedName>
        <fullName evidence="1">Uroporphyrinogen decarboxylase</fullName>
        <shortName evidence="1">UPD</shortName>
        <shortName evidence="1">URO-D</shortName>
        <ecNumber evidence="1">4.1.1.37</ecNumber>
    </recommendedName>
</protein>
<comment type="function">
    <text evidence="1">Catalyzes the decarboxylation of four acetate groups of uroporphyrinogen-III to yield coproporphyrinogen-III.</text>
</comment>
<comment type="catalytic activity">
    <reaction evidence="1">
        <text>uroporphyrinogen III + 4 H(+) = coproporphyrinogen III + 4 CO2</text>
        <dbReference type="Rhea" id="RHEA:19865"/>
        <dbReference type="ChEBI" id="CHEBI:15378"/>
        <dbReference type="ChEBI" id="CHEBI:16526"/>
        <dbReference type="ChEBI" id="CHEBI:57308"/>
        <dbReference type="ChEBI" id="CHEBI:57309"/>
        <dbReference type="EC" id="4.1.1.37"/>
    </reaction>
</comment>
<comment type="pathway">
    <text evidence="1">Porphyrin-containing compound metabolism; protoporphyrin-IX biosynthesis; coproporphyrinogen-III from 5-aminolevulinate: step 4/4.</text>
</comment>
<comment type="subunit">
    <text evidence="1">Homodimer.</text>
</comment>
<comment type="subcellular location">
    <subcellularLocation>
        <location evidence="1">Cytoplasm</location>
    </subcellularLocation>
</comment>
<comment type="similarity">
    <text evidence="1">Belongs to the uroporphyrinogen decarboxylase family.</text>
</comment>
<gene>
    <name evidence="1" type="primary">hemE</name>
    <name type="ordered locus">SAV_2228</name>
</gene>
<keyword id="KW-0963">Cytoplasm</keyword>
<keyword id="KW-0210">Decarboxylase</keyword>
<keyword id="KW-0456">Lyase</keyword>
<keyword id="KW-0627">Porphyrin biosynthesis</keyword>
<keyword id="KW-1185">Reference proteome</keyword>
<dbReference type="EC" id="4.1.1.37" evidence="1"/>
<dbReference type="EMBL" id="BA000030">
    <property type="protein sequence ID" value="BAC69939.1"/>
    <property type="molecule type" value="Genomic_DNA"/>
</dbReference>
<dbReference type="RefSeq" id="WP_010983668.1">
    <property type="nucleotide sequence ID" value="NZ_JZJK01000086.1"/>
</dbReference>
<dbReference type="SMR" id="Q82KY4"/>
<dbReference type="GeneID" id="41539323"/>
<dbReference type="KEGG" id="sma:SAVERM_2228"/>
<dbReference type="eggNOG" id="COG0407">
    <property type="taxonomic scope" value="Bacteria"/>
</dbReference>
<dbReference type="HOGENOM" id="CLU_040933_0_1_11"/>
<dbReference type="OrthoDB" id="9806656at2"/>
<dbReference type="UniPathway" id="UPA00251">
    <property type="reaction ID" value="UER00321"/>
</dbReference>
<dbReference type="Proteomes" id="UP000000428">
    <property type="component" value="Chromosome"/>
</dbReference>
<dbReference type="GO" id="GO:0005829">
    <property type="term" value="C:cytosol"/>
    <property type="evidence" value="ECO:0007669"/>
    <property type="project" value="TreeGrafter"/>
</dbReference>
<dbReference type="GO" id="GO:0004853">
    <property type="term" value="F:uroporphyrinogen decarboxylase activity"/>
    <property type="evidence" value="ECO:0007669"/>
    <property type="project" value="UniProtKB-UniRule"/>
</dbReference>
<dbReference type="GO" id="GO:0006782">
    <property type="term" value="P:protoporphyrinogen IX biosynthetic process"/>
    <property type="evidence" value="ECO:0007669"/>
    <property type="project" value="UniProtKB-UniRule"/>
</dbReference>
<dbReference type="CDD" id="cd00717">
    <property type="entry name" value="URO-D"/>
    <property type="match status" value="1"/>
</dbReference>
<dbReference type="FunFam" id="3.20.20.210:FF:000005">
    <property type="entry name" value="Uroporphyrinogen decarboxylase"/>
    <property type="match status" value="1"/>
</dbReference>
<dbReference type="Gene3D" id="3.20.20.210">
    <property type="match status" value="1"/>
</dbReference>
<dbReference type="HAMAP" id="MF_00218">
    <property type="entry name" value="URO_D"/>
    <property type="match status" value="1"/>
</dbReference>
<dbReference type="InterPro" id="IPR038071">
    <property type="entry name" value="UROD/MetE-like_sf"/>
</dbReference>
<dbReference type="InterPro" id="IPR006361">
    <property type="entry name" value="Uroporphyrinogen_deCO2ase_HemE"/>
</dbReference>
<dbReference type="InterPro" id="IPR000257">
    <property type="entry name" value="Uroporphyrinogen_deCOase"/>
</dbReference>
<dbReference type="NCBIfam" id="TIGR01464">
    <property type="entry name" value="hemE"/>
    <property type="match status" value="1"/>
</dbReference>
<dbReference type="PANTHER" id="PTHR21091">
    <property type="entry name" value="METHYLTETRAHYDROFOLATE:HOMOCYSTEINE METHYLTRANSFERASE RELATED"/>
    <property type="match status" value="1"/>
</dbReference>
<dbReference type="PANTHER" id="PTHR21091:SF169">
    <property type="entry name" value="UROPORPHYRINOGEN DECARBOXYLASE"/>
    <property type="match status" value="1"/>
</dbReference>
<dbReference type="Pfam" id="PF01208">
    <property type="entry name" value="URO-D"/>
    <property type="match status" value="1"/>
</dbReference>
<dbReference type="SUPFAM" id="SSF51726">
    <property type="entry name" value="UROD/MetE-like"/>
    <property type="match status" value="1"/>
</dbReference>
<dbReference type="PROSITE" id="PS00906">
    <property type="entry name" value="UROD_1"/>
    <property type="match status" value="1"/>
</dbReference>
<dbReference type="PROSITE" id="PS00907">
    <property type="entry name" value="UROD_2"/>
    <property type="match status" value="1"/>
</dbReference>
<accession>Q82KY4</accession>
<proteinExistence type="inferred from homology"/>
<reference key="1">
    <citation type="journal article" date="2001" name="Proc. Natl. Acad. Sci. U.S.A.">
        <title>Genome sequence of an industrial microorganism Streptomyces avermitilis: deducing the ability of producing secondary metabolites.</title>
        <authorList>
            <person name="Omura S."/>
            <person name="Ikeda H."/>
            <person name="Ishikawa J."/>
            <person name="Hanamoto A."/>
            <person name="Takahashi C."/>
            <person name="Shinose M."/>
            <person name="Takahashi Y."/>
            <person name="Horikawa H."/>
            <person name="Nakazawa H."/>
            <person name="Osonoe T."/>
            <person name="Kikuchi H."/>
            <person name="Shiba T."/>
            <person name="Sakaki Y."/>
            <person name="Hattori M."/>
        </authorList>
    </citation>
    <scope>NUCLEOTIDE SEQUENCE [LARGE SCALE GENOMIC DNA]</scope>
    <source>
        <strain>ATCC 31267 / DSM 46492 / JCM 5070 / NBRC 14893 / NCIMB 12804 / NRRL 8165 / MA-4680</strain>
    </source>
</reference>
<reference key="2">
    <citation type="journal article" date="2003" name="Nat. Biotechnol.">
        <title>Complete genome sequence and comparative analysis of the industrial microorganism Streptomyces avermitilis.</title>
        <authorList>
            <person name="Ikeda H."/>
            <person name="Ishikawa J."/>
            <person name="Hanamoto A."/>
            <person name="Shinose M."/>
            <person name="Kikuchi H."/>
            <person name="Shiba T."/>
            <person name="Sakaki Y."/>
            <person name="Hattori M."/>
            <person name="Omura S."/>
        </authorList>
    </citation>
    <scope>NUCLEOTIDE SEQUENCE [LARGE SCALE GENOMIC DNA]</scope>
    <source>
        <strain>ATCC 31267 / DSM 46492 / JCM 5070 / NBRC 14893 / NCIMB 12804 / NRRL 8165 / MA-4680</strain>
    </source>
</reference>